<comment type="function">
    <text evidence="1">Involved in vesicle transport in photoreceptor cells.</text>
</comment>
<comment type="subunit">
    <text evidence="2">Interacts with NINL. Associates with DYNC1H1 and multiple dynein intermediate and light chains as well as actin-binding proteins.</text>
</comment>
<comment type="subcellular location">
    <subcellularLocation>
        <location evidence="2">Cytoplasm</location>
        <location evidence="2">Cytoskeleton</location>
        <location evidence="2">Microtubule organizing center</location>
        <location evidence="2">Centrosome</location>
    </subcellularLocation>
    <subcellularLocation>
        <location evidence="2">Cytoplasm</location>
        <location evidence="2">Cytoskeleton</location>
        <location evidence="2">Cilium basal body</location>
    </subcellularLocation>
    <text evidence="2">Colocalizes with NINL at the base of cilia.</text>
</comment>
<comment type="alternative products">
    <event type="alternative splicing"/>
    <isoform>
        <id>Q9GKS9-1</id>
        <name>1</name>
        <sequence type="displayed"/>
    </isoform>
    <isoform>
        <id>Q9GKS9-2</id>
        <name>2</name>
        <sequence type="described" ref="VSP_062031"/>
    </isoform>
</comment>
<comment type="sequence caution" evidence="5">
    <conflict type="frameshift">
        <sequence resource="EMBL-CDS" id="BAB19005"/>
    </conflict>
</comment>
<evidence type="ECO:0000250" key="1">
    <source>
        <dbReference type="UniProtKB" id="Q1LXR6"/>
    </source>
</evidence>
<evidence type="ECO:0000250" key="2">
    <source>
        <dbReference type="UniProtKB" id="Q9NVP4"/>
    </source>
</evidence>
<evidence type="ECO:0000255" key="3"/>
<evidence type="ECO:0000256" key="4">
    <source>
        <dbReference type="SAM" id="MobiDB-lite"/>
    </source>
</evidence>
<evidence type="ECO:0000305" key="5"/>
<gene>
    <name type="primary">DZANK1</name>
    <name type="ORF">QccE-20932</name>
</gene>
<protein>
    <recommendedName>
        <fullName>Double zinc ribbon and ankyrin repeat-containing protein 1</fullName>
    </recommendedName>
</protein>
<proteinExistence type="evidence at transcript level"/>
<feature type="chain" id="PRO_0000066987" description="Double zinc ribbon and ankyrin repeat-containing protein 1">
    <location>
        <begin position="1"/>
        <end position="777"/>
    </location>
</feature>
<feature type="repeat" description="ANK 1" evidence="3">
    <location>
        <begin position="442"/>
        <end position="473"/>
    </location>
</feature>
<feature type="repeat" description="ANK 2" evidence="3">
    <location>
        <begin position="477"/>
        <end position="506"/>
    </location>
</feature>
<feature type="zinc finger region" description="DZANK-type 1">
    <location>
        <begin position="230"/>
        <end position="289"/>
    </location>
</feature>
<feature type="zinc finger region" description="DZANK-type 2">
    <location>
        <begin position="358"/>
        <end position="406"/>
    </location>
</feature>
<feature type="region of interest" description="Disordered" evidence="4">
    <location>
        <begin position="161"/>
        <end position="202"/>
    </location>
</feature>
<feature type="compositionally biased region" description="Basic and acidic residues" evidence="4">
    <location>
        <begin position="161"/>
        <end position="176"/>
    </location>
</feature>
<feature type="compositionally biased region" description="Polar residues" evidence="4">
    <location>
        <begin position="193"/>
        <end position="202"/>
    </location>
</feature>
<feature type="modified residue" description="Phosphoserine" evidence="2">
    <location>
        <position position="201"/>
    </location>
</feature>
<feature type="splice variant" id="VSP_062031" description="In isoform 2.">
    <original>MTAGSVCVPQIIPLRVPQPGKANHEIDNNTLLEMKSDTPDVNIYYTLDGSKPEFLKRTGYVENNTFKYTKPITLPDGKIQVKAIAVSKDCRQSGIVTKVFQVGYEPPNVVSPEDNVENVLKDSSRQEFKNGLVGSKLKKKYQNSENQRSWNVNLRKFPDLQVGERTDPKTLKDLRFSESPLEIPAHSGGSGSRPPTRQS</original>
    <variation>MLTSESFQRVHWKSQLTVEDQVLDHPPA</variation>
    <location>
        <begin position="1"/>
        <end position="199"/>
    </location>
</feature>
<feature type="sequence conflict" description="In Ref. 1; BAB19005." evidence="5" ref="1">
    <original>R</original>
    <variation>C</variation>
    <location>
        <position position="237"/>
    </location>
</feature>
<feature type="sequence conflict" description="In Ref. 1; BAB19005." evidence="5" ref="1">
    <original>L</original>
    <variation>P</variation>
    <location>
        <position position="348"/>
    </location>
</feature>
<feature type="sequence conflict" description="In Ref. 1; BAB19005." evidence="5" ref="1">
    <original>G</original>
    <variation>E</variation>
    <location>
        <position position="586"/>
    </location>
</feature>
<feature type="sequence conflict" description="In Ref. 1; BAB19005." evidence="5" ref="1">
    <original>I</original>
    <variation>V</variation>
    <location>
        <position position="718"/>
    </location>
</feature>
<feature type="sequence conflict" description="In Ref. 1; BAB19005." evidence="5" ref="1">
    <original>I</original>
    <variation>V</variation>
    <location>
        <position position="728"/>
    </location>
</feature>
<reference key="1">
    <citation type="submission" date="2000-12" db="EMBL/GenBank/DDBJ databases">
        <title>Isolation of full-length cDNA clones from macaque brain cDNA libraries.</title>
        <authorList>
            <person name="Osada N."/>
            <person name="Hida M."/>
            <person name="Kusuda J."/>
            <person name="Tanuma R."/>
            <person name="Iseki K."/>
            <person name="Hirai M."/>
            <person name="Terao K."/>
            <person name="Suzuki Y."/>
            <person name="Sugano S."/>
            <person name="Hashimoto K."/>
        </authorList>
    </citation>
    <scope>NUCLEOTIDE SEQUENCE [LARGE SCALE MRNA] (ISOFORM 2)</scope>
    <source>
        <tissue>Brain cortex</tissue>
    </source>
</reference>
<reference key="2">
    <citation type="submission" date="2013-03" db="EMBL/GenBank/DDBJ databases">
        <authorList>
            <person name="Warren W."/>
            <person name="Wilson R.K."/>
        </authorList>
    </citation>
    <scope>NUCLEOTIDE SEQUENCE [LARGE SCALE GENOMIC DNA]</scope>
</reference>
<name>DZAN1_MACFA</name>
<keyword id="KW-0025">Alternative splicing</keyword>
<keyword id="KW-0040">ANK repeat</keyword>
<keyword id="KW-0966">Cell projection</keyword>
<keyword id="KW-0963">Cytoplasm</keyword>
<keyword id="KW-0206">Cytoskeleton</keyword>
<keyword id="KW-0479">Metal-binding</keyword>
<keyword id="KW-0597">Phosphoprotein</keyword>
<keyword id="KW-1185">Reference proteome</keyword>
<keyword id="KW-0677">Repeat</keyword>
<keyword id="KW-0862">Zinc</keyword>
<keyword id="KW-0863">Zinc-finger</keyword>
<organism>
    <name type="scientific">Macaca fascicularis</name>
    <name type="common">Crab-eating macaque</name>
    <name type="synonym">Cynomolgus monkey</name>
    <dbReference type="NCBI Taxonomy" id="9541"/>
    <lineage>
        <taxon>Eukaryota</taxon>
        <taxon>Metazoa</taxon>
        <taxon>Chordata</taxon>
        <taxon>Craniata</taxon>
        <taxon>Vertebrata</taxon>
        <taxon>Euteleostomi</taxon>
        <taxon>Mammalia</taxon>
        <taxon>Eutheria</taxon>
        <taxon>Euarchontoglires</taxon>
        <taxon>Primates</taxon>
        <taxon>Haplorrhini</taxon>
        <taxon>Catarrhini</taxon>
        <taxon>Cercopithecidae</taxon>
        <taxon>Cercopithecinae</taxon>
        <taxon>Macaca</taxon>
    </lineage>
</organism>
<sequence length="777" mass="85066">MTAGSVCVPQIIPLRVPQPGKANHEIDNNTLLEMKSDTPDVNIYYTLDGSKPEFLKRTGYVENNTFKYTKPITLPDGKIQVKAIAVSKDCRQSGIVTKVFQVGYEPPNVVSPEDNVENVLKDSSRQEFKNGLVGSKLKKKYQNSENQRSWNVNLRKFPDLQVGERTDPKTLKDLRFSESPLEIPAHSGGSGSRPPTRQSQSPGFAHISGLKCLTSTEIMRIQRETDFLKCAHCLAPRPSDPFARFCQECGSPVPPIFGCRLPPPEGAQMGLCAECRSLVPMNTPICVVCEAPLALQLQPQASLHLKEKVICRACGTGNPAHLRYCVTCEGALPSSQESICSGDKASPLPTQKGGTISCSRCGRWNLWEASFCGWCGAMLGIPAGCSVCPKCGASNHLSARFCGSCGICVKSLVKLSLDRSLALAAQEPRPFSEPQCAWQSLNIPLPRSDAGTKRDIGTQTVGLFYPSGKLLAKKELEIASQKQRQEKMSDHKPLLTAISPGRGYWRRQLDHISAHLRCYAQNNPEFRALIAEPRMGKLISATVHEDGCEVSIRLNYSQVSNKNLYLNKAVNFSDHLLSSAAEGDGGLCGSRSSWVSDYSQSTSDTIEKIKRIRNFKTKTFQEKEEQLLPENRLLLKEVGPTGEGRVSVIEQLLDEGADPNCCDEDNRPVITVAVMNKHHEAIPVLVQRGADIDQQWGPLRNTALHEATLLGFAGRESIATLLGCNASIRKKNAGGQTAYDLALNTGDDLITSLFAAKFGQGLEDQLAQTRSLRLDDC</sequence>
<dbReference type="EMBL" id="AB052150">
    <property type="protein sequence ID" value="BAB19005.1"/>
    <property type="status" value="ALT_FRAME"/>
    <property type="molecule type" value="mRNA"/>
</dbReference>
<dbReference type="EMBL" id="AQIA01008038">
    <property type="status" value="NOT_ANNOTATED_CDS"/>
    <property type="molecule type" value="Genomic_DNA"/>
</dbReference>
<dbReference type="EMBL" id="AQIA01008039">
    <property type="status" value="NOT_ANNOTATED_CDS"/>
    <property type="molecule type" value="Genomic_DNA"/>
</dbReference>
<dbReference type="EMBL" id="AQIA01008040">
    <property type="status" value="NOT_ANNOTATED_CDS"/>
    <property type="molecule type" value="Genomic_DNA"/>
</dbReference>
<dbReference type="EMBL" id="AQIA01008041">
    <property type="status" value="NOT_ANNOTATED_CDS"/>
    <property type="molecule type" value="Genomic_DNA"/>
</dbReference>
<dbReference type="SMR" id="Q9GKS9"/>
<dbReference type="STRING" id="9541.ENSMFAP00000041073"/>
<dbReference type="Ensembl" id="ENSMFAT00000015346.2">
    <molecule id="Q9GKS9-1"/>
    <property type="protein sequence ID" value="ENSMFAP00000041073.2"/>
    <property type="gene ID" value="ENSMFAG00000041179.2"/>
</dbReference>
<dbReference type="VEuPathDB" id="HostDB:ENSMFAG00000041179"/>
<dbReference type="eggNOG" id="ENOG502QTJR">
    <property type="taxonomic scope" value="Eukaryota"/>
</dbReference>
<dbReference type="GeneTree" id="ENSGT00390000000549"/>
<dbReference type="Proteomes" id="UP000233100">
    <property type="component" value="Chromosome 10"/>
</dbReference>
<dbReference type="Bgee" id="ENSMFAG00000041179">
    <property type="expression patterns" value="Expressed in temporal lobe and 9 other cell types or tissues"/>
</dbReference>
<dbReference type="GO" id="GO:0042995">
    <property type="term" value="C:cell projection"/>
    <property type="evidence" value="ECO:0007669"/>
    <property type="project" value="UniProtKB-KW"/>
</dbReference>
<dbReference type="GO" id="GO:0005813">
    <property type="term" value="C:centrosome"/>
    <property type="evidence" value="ECO:0000250"/>
    <property type="project" value="UniProtKB"/>
</dbReference>
<dbReference type="GO" id="GO:0005737">
    <property type="term" value="C:cytoplasm"/>
    <property type="evidence" value="ECO:0007669"/>
    <property type="project" value="UniProtKB-KW"/>
</dbReference>
<dbReference type="GO" id="GO:0008270">
    <property type="term" value="F:zinc ion binding"/>
    <property type="evidence" value="ECO:0007669"/>
    <property type="project" value="UniProtKB-KW"/>
</dbReference>
<dbReference type="GO" id="GO:0042462">
    <property type="term" value="P:eye photoreceptor cell development"/>
    <property type="evidence" value="ECO:0000250"/>
    <property type="project" value="UniProtKB"/>
</dbReference>
<dbReference type="Gene3D" id="1.25.40.20">
    <property type="entry name" value="Ankyrin repeat-containing domain"/>
    <property type="match status" value="1"/>
</dbReference>
<dbReference type="InterPro" id="IPR002110">
    <property type="entry name" value="Ankyrin_rpt"/>
</dbReference>
<dbReference type="InterPro" id="IPR036770">
    <property type="entry name" value="Ankyrin_rpt-contain_sf"/>
</dbReference>
<dbReference type="InterPro" id="IPR052481">
    <property type="entry name" value="DZAN1"/>
</dbReference>
<dbReference type="InterPro" id="IPR025874">
    <property type="entry name" value="DZR"/>
</dbReference>
<dbReference type="InterPro" id="IPR026876">
    <property type="entry name" value="Fn3_assoc_repeat"/>
</dbReference>
<dbReference type="PANTHER" id="PTHR16058">
    <property type="entry name" value="DOUBLE ZINC RIBBON AND ANKYRIN REPEAT-CONTAINING PROTEIN 1"/>
    <property type="match status" value="1"/>
</dbReference>
<dbReference type="PANTHER" id="PTHR16058:SF4">
    <property type="entry name" value="DOUBLE ZINC RIBBON AND ANKYRIN REPEAT-CONTAINING PROTEIN 1"/>
    <property type="match status" value="1"/>
</dbReference>
<dbReference type="Pfam" id="PF12796">
    <property type="entry name" value="Ank_2"/>
    <property type="match status" value="1"/>
</dbReference>
<dbReference type="Pfam" id="PF12773">
    <property type="entry name" value="DZR"/>
    <property type="match status" value="1"/>
</dbReference>
<dbReference type="Pfam" id="PF13287">
    <property type="entry name" value="Fn3_assoc"/>
    <property type="match status" value="1"/>
</dbReference>
<dbReference type="SUPFAM" id="SSF48403">
    <property type="entry name" value="Ankyrin repeat"/>
    <property type="match status" value="1"/>
</dbReference>
<accession>Q9GKS9</accession>
<accession>A0A2K5WVL3</accession>